<organism>
    <name type="scientific">Clostridium perfringens (strain ATCC 13124 / DSM 756 / JCM 1290 / NCIMB 6125 / NCTC 8237 / Type A)</name>
    <dbReference type="NCBI Taxonomy" id="195103"/>
    <lineage>
        <taxon>Bacteria</taxon>
        <taxon>Bacillati</taxon>
        <taxon>Bacillota</taxon>
        <taxon>Clostridia</taxon>
        <taxon>Eubacteriales</taxon>
        <taxon>Clostridiaceae</taxon>
        <taxon>Clostridium</taxon>
    </lineage>
</organism>
<reference key="1">
    <citation type="journal article" date="2006" name="Genome Res.">
        <title>Skewed genomic variability in strains of the toxigenic bacterial pathogen, Clostridium perfringens.</title>
        <authorList>
            <person name="Myers G.S.A."/>
            <person name="Rasko D.A."/>
            <person name="Cheung J.K."/>
            <person name="Ravel J."/>
            <person name="Seshadri R."/>
            <person name="DeBoy R.T."/>
            <person name="Ren Q."/>
            <person name="Varga J."/>
            <person name="Awad M.M."/>
            <person name="Brinkac L.M."/>
            <person name="Daugherty S.C."/>
            <person name="Haft D.H."/>
            <person name="Dodson R.J."/>
            <person name="Madupu R."/>
            <person name="Nelson W.C."/>
            <person name="Rosovitz M.J."/>
            <person name="Sullivan S.A."/>
            <person name="Khouri H."/>
            <person name="Dimitrov G.I."/>
            <person name="Watkins K.L."/>
            <person name="Mulligan S."/>
            <person name="Benton J."/>
            <person name="Radune D."/>
            <person name="Fisher D.J."/>
            <person name="Atkins H.S."/>
            <person name="Hiscox T."/>
            <person name="Jost B.H."/>
            <person name="Billington S.J."/>
            <person name="Songer J.G."/>
            <person name="McClane B.A."/>
            <person name="Titball R.W."/>
            <person name="Rood J.I."/>
            <person name="Melville S.B."/>
            <person name="Paulsen I.T."/>
        </authorList>
    </citation>
    <scope>NUCLEOTIDE SEQUENCE [LARGE SCALE GENOMIC DNA]</scope>
    <source>
        <strain>ATCC 13124 / DSM 756 / JCM 1290 / NCIMB 6125 / NCTC 8237 / S 107 / Type A</strain>
    </source>
</reference>
<gene>
    <name evidence="1" type="primary">spoIIAB</name>
    <name type="ordered locus">CPF_2306</name>
</gene>
<sequence>MDNKMRLEFLAKSENEGFARVSVSAFIAQLDPTIEELTDIKTAVSEAVTNAIIHGYECDESKVVIIEASICEDEISITVEDNGIGIENLEEAREPLYTSKPELERSGMGFTVMETFMDSLEVYSEKDKGTKIIMKKKMNT</sequence>
<feature type="chain" id="PRO_0000301412" description="Anti-sigma F factor">
    <location>
        <begin position="1"/>
        <end position="140"/>
    </location>
</feature>
<accession>Q0TNR1</accession>
<name>SP2AB_CLOP1</name>
<comment type="function">
    <text evidence="1">Binds to sigma F and blocks its ability to form an RNA polymerase holoenzyme (E-sigma F). Phosphorylates SpoIIAA on a serine residue. This phosphorylation may enable SpoIIAA to act as an anti-anti-sigma factor that counteracts SpoIIAB and thus releases sigma F from inhibition.</text>
</comment>
<comment type="catalytic activity">
    <reaction evidence="1">
        <text>L-seryl-[protein] + ATP = O-phospho-L-seryl-[protein] + ADP + H(+)</text>
        <dbReference type="Rhea" id="RHEA:17989"/>
        <dbReference type="Rhea" id="RHEA-COMP:9863"/>
        <dbReference type="Rhea" id="RHEA-COMP:11604"/>
        <dbReference type="ChEBI" id="CHEBI:15378"/>
        <dbReference type="ChEBI" id="CHEBI:29999"/>
        <dbReference type="ChEBI" id="CHEBI:30616"/>
        <dbReference type="ChEBI" id="CHEBI:83421"/>
        <dbReference type="ChEBI" id="CHEBI:456216"/>
        <dbReference type="EC" id="2.7.11.1"/>
    </reaction>
</comment>
<comment type="catalytic activity">
    <reaction evidence="1">
        <text>L-threonyl-[protein] + ATP = O-phospho-L-threonyl-[protein] + ADP + H(+)</text>
        <dbReference type="Rhea" id="RHEA:46608"/>
        <dbReference type="Rhea" id="RHEA-COMP:11060"/>
        <dbReference type="Rhea" id="RHEA-COMP:11605"/>
        <dbReference type="ChEBI" id="CHEBI:15378"/>
        <dbReference type="ChEBI" id="CHEBI:30013"/>
        <dbReference type="ChEBI" id="CHEBI:30616"/>
        <dbReference type="ChEBI" id="CHEBI:61977"/>
        <dbReference type="ChEBI" id="CHEBI:456216"/>
        <dbReference type="EC" id="2.7.11.1"/>
    </reaction>
</comment>
<comment type="similarity">
    <text evidence="1">Belongs to the anti-sigma-factor family.</text>
</comment>
<keyword id="KW-0067">ATP-binding</keyword>
<keyword id="KW-0418">Kinase</keyword>
<keyword id="KW-0547">Nucleotide-binding</keyword>
<keyword id="KW-0723">Serine/threonine-protein kinase</keyword>
<keyword id="KW-0749">Sporulation</keyword>
<keyword id="KW-0808">Transferase</keyword>
<proteinExistence type="inferred from homology"/>
<evidence type="ECO:0000255" key="1">
    <source>
        <dbReference type="HAMAP-Rule" id="MF_00637"/>
    </source>
</evidence>
<dbReference type="EC" id="2.7.11.1" evidence="1"/>
<dbReference type="EMBL" id="CP000246">
    <property type="protein sequence ID" value="ABG85043.1"/>
    <property type="molecule type" value="Genomic_DNA"/>
</dbReference>
<dbReference type="RefSeq" id="WP_003451402.1">
    <property type="nucleotide sequence ID" value="NC_008261.1"/>
</dbReference>
<dbReference type="SMR" id="Q0TNR1"/>
<dbReference type="STRING" id="195103.CPF_2306"/>
<dbReference type="PaxDb" id="195103-CPF_2306"/>
<dbReference type="GeneID" id="93001413"/>
<dbReference type="KEGG" id="cpf:CPF_2306"/>
<dbReference type="eggNOG" id="COG2172">
    <property type="taxonomic scope" value="Bacteria"/>
</dbReference>
<dbReference type="HOGENOM" id="CLU_090336_11_0_9"/>
<dbReference type="Proteomes" id="UP000001823">
    <property type="component" value="Chromosome"/>
</dbReference>
<dbReference type="GO" id="GO:0005524">
    <property type="term" value="F:ATP binding"/>
    <property type="evidence" value="ECO:0007669"/>
    <property type="project" value="UniProtKB-KW"/>
</dbReference>
<dbReference type="GO" id="GO:0106310">
    <property type="term" value="F:protein serine kinase activity"/>
    <property type="evidence" value="ECO:0007669"/>
    <property type="project" value="RHEA"/>
</dbReference>
<dbReference type="GO" id="GO:0004674">
    <property type="term" value="F:protein serine/threonine kinase activity"/>
    <property type="evidence" value="ECO:0007669"/>
    <property type="project" value="UniProtKB-KW"/>
</dbReference>
<dbReference type="GO" id="GO:0016989">
    <property type="term" value="F:sigma factor antagonist activity"/>
    <property type="evidence" value="ECO:0007669"/>
    <property type="project" value="InterPro"/>
</dbReference>
<dbReference type="GO" id="GO:0030436">
    <property type="term" value="P:asexual sporulation"/>
    <property type="evidence" value="ECO:0007669"/>
    <property type="project" value="UniProtKB-UniRule"/>
</dbReference>
<dbReference type="GO" id="GO:0042174">
    <property type="term" value="P:negative regulation of sporulation resulting in formation of a cellular spore"/>
    <property type="evidence" value="ECO:0007669"/>
    <property type="project" value="InterPro"/>
</dbReference>
<dbReference type="GO" id="GO:0030435">
    <property type="term" value="P:sporulation resulting in formation of a cellular spore"/>
    <property type="evidence" value="ECO:0007669"/>
    <property type="project" value="UniProtKB-KW"/>
</dbReference>
<dbReference type="CDD" id="cd16942">
    <property type="entry name" value="HATPase_SpoIIAB-like"/>
    <property type="match status" value="1"/>
</dbReference>
<dbReference type="Gene3D" id="3.30.565.10">
    <property type="entry name" value="Histidine kinase-like ATPase, C-terminal domain"/>
    <property type="match status" value="1"/>
</dbReference>
<dbReference type="HAMAP" id="MF_00637">
    <property type="entry name" value="Anti_sigma_F"/>
    <property type="match status" value="1"/>
</dbReference>
<dbReference type="InterPro" id="IPR050267">
    <property type="entry name" value="Anti-sigma-factor_SerPK"/>
</dbReference>
<dbReference type="InterPro" id="IPR010194">
    <property type="entry name" value="Anti-sigma_F"/>
</dbReference>
<dbReference type="InterPro" id="IPR036890">
    <property type="entry name" value="HATPase_C_sf"/>
</dbReference>
<dbReference type="NCBIfam" id="TIGR01925">
    <property type="entry name" value="spIIAB"/>
    <property type="match status" value="1"/>
</dbReference>
<dbReference type="PANTHER" id="PTHR35526:SF3">
    <property type="entry name" value="ANTI-SIGMA-F FACTOR RSBW"/>
    <property type="match status" value="1"/>
</dbReference>
<dbReference type="PANTHER" id="PTHR35526">
    <property type="entry name" value="ANTI-SIGMA-F FACTOR RSBW-RELATED"/>
    <property type="match status" value="1"/>
</dbReference>
<dbReference type="Pfam" id="PF13581">
    <property type="entry name" value="HATPase_c_2"/>
    <property type="match status" value="1"/>
</dbReference>
<dbReference type="SMART" id="SM00387">
    <property type="entry name" value="HATPase_c"/>
    <property type="match status" value="1"/>
</dbReference>
<dbReference type="SUPFAM" id="SSF55874">
    <property type="entry name" value="ATPase domain of HSP90 chaperone/DNA topoisomerase II/histidine kinase"/>
    <property type="match status" value="1"/>
</dbReference>
<protein>
    <recommendedName>
        <fullName evidence="1">Anti-sigma F factor</fullName>
        <ecNumber evidence="1">2.7.11.1</ecNumber>
    </recommendedName>
    <alternativeName>
        <fullName evidence="1">Stage II sporulation protein AB</fullName>
    </alternativeName>
</protein>